<reference key="1">
    <citation type="journal article" date="2005" name="Mol. Biol. Evol.">
        <title>Analysis of Acorus calamus chloroplast genome and its phylogenetic implications.</title>
        <authorList>
            <person name="Goremykin V.V."/>
            <person name="Holland B."/>
            <person name="Hirsch-Ernst K.I."/>
            <person name="Hellwig F.H."/>
        </authorList>
    </citation>
    <scope>NUCLEOTIDE SEQUENCE [LARGE SCALE GENOMIC DNA]</scope>
</reference>
<organism>
    <name type="scientific">Acorus calamus</name>
    <name type="common">Sweet flag</name>
    <dbReference type="NCBI Taxonomy" id="4465"/>
    <lineage>
        <taxon>Eukaryota</taxon>
        <taxon>Viridiplantae</taxon>
        <taxon>Streptophyta</taxon>
        <taxon>Embryophyta</taxon>
        <taxon>Tracheophyta</taxon>
        <taxon>Spermatophyta</taxon>
        <taxon>Magnoliopsida</taxon>
        <taxon>Liliopsida</taxon>
        <taxon>Acoraceae</taxon>
        <taxon>Acorus</taxon>
    </lineage>
</organism>
<comment type="function">
    <text evidence="1">NDH shuttles electrons from NAD(P)H:plastoquinone, via FMN and iron-sulfur (Fe-S) centers, to quinones in the photosynthetic chain and possibly in a chloroplast respiratory chain. The immediate electron acceptor for the enzyme in this species is believed to be plastoquinone. Couples the redox reaction to proton translocation, and thus conserves the redox energy in a proton gradient.</text>
</comment>
<comment type="catalytic activity">
    <reaction evidence="1">
        <text>a plastoquinone + NADH + (n+1) H(+)(in) = a plastoquinol + NAD(+) + n H(+)(out)</text>
        <dbReference type="Rhea" id="RHEA:42608"/>
        <dbReference type="Rhea" id="RHEA-COMP:9561"/>
        <dbReference type="Rhea" id="RHEA-COMP:9562"/>
        <dbReference type="ChEBI" id="CHEBI:15378"/>
        <dbReference type="ChEBI" id="CHEBI:17757"/>
        <dbReference type="ChEBI" id="CHEBI:57540"/>
        <dbReference type="ChEBI" id="CHEBI:57945"/>
        <dbReference type="ChEBI" id="CHEBI:62192"/>
    </reaction>
</comment>
<comment type="catalytic activity">
    <reaction evidence="1">
        <text>a plastoquinone + NADPH + (n+1) H(+)(in) = a plastoquinol + NADP(+) + n H(+)(out)</text>
        <dbReference type="Rhea" id="RHEA:42612"/>
        <dbReference type="Rhea" id="RHEA-COMP:9561"/>
        <dbReference type="Rhea" id="RHEA-COMP:9562"/>
        <dbReference type="ChEBI" id="CHEBI:15378"/>
        <dbReference type="ChEBI" id="CHEBI:17757"/>
        <dbReference type="ChEBI" id="CHEBI:57783"/>
        <dbReference type="ChEBI" id="CHEBI:58349"/>
        <dbReference type="ChEBI" id="CHEBI:62192"/>
    </reaction>
</comment>
<comment type="subunit">
    <text evidence="1">NDH is composed of at least 16 different subunits, 5 of which are encoded in the nucleus.</text>
</comment>
<comment type="subcellular location">
    <subcellularLocation>
        <location evidence="1">Plastid</location>
        <location evidence="1">Chloroplast thylakoid membrane</location>
        <topology evidence="1">Multi-pass membrane protein</topology>
    </subcellularLocation>
</comment>
<comment type="similarity">
    <text evidence="1">Belongs to the complex I subunit 2 family.</text>
</comment>
<feature type="chain" id="PRO_0000225340" description="NAD(P)H-quinone oxidoreductase subunit 2 A, chloroplastic">
    <location>
        <begin position="1"/>
        <end position="510"/>
    </location>
</feature>
<feature type="transmembrane region" description="Helical" evidence="1">
    <location>
        <begin position="24"/>
        <end position="44"/>
    </location>
</feature>
<feature type="transmembrane region" description="Helical" evidence="1">
    <location>
        <begin position="59"/>
        <end position="79"/>
    </location>
</feature>
<feature type="transmembrane region" description="Helical" evidence="1">
    <location>
        <begin position="99"/>
        <end position="119"/>
    </location>
</feature>
<feature type="transmembrane region" description="Helical" evidence="1">
    <location>
        <begin position="124"/>
        <end position="144"/>
    </location>
</feature>
<feature type="transmembrane region" description="Helical" evidence="1">
    <location>
        <begin position="150"/>
        <end position="170"/>
    </location>
</feature>
<feature type="transmembrane region" description="Helical" evidence="1">
    <location>
        <begin position="184"/>
        <end position="204"/>
    </location>
</feature>
<feature type="transmembrane region" description="Helical" evidence="1">
    <location>
        <begin position="229"/>
        <end position="249"/>
    </location>
</feature>
<feature type="transmembrane region" description="Helical" evidence="1">
    <location>
        <begin position="295"/>
        <end position="315"/>
    </location>
</feature>
<feature type="transmembrane region" description="Helical" evidence="1">
    <location>
        <begin position="323"/>
        <end position="343"/>
    </location>
</feature>
<feature type="transmembrane region" description="Helical" evidence="1">
    <location>
        <begin position="354"/>
        <end position="374"/>
    </location>
</feature>
<feature type="transmembrane region" description="Helical" evidence="1">
    <location>
        <begin position="395"/>
        <end position="415"/>
    </location>
</feature>
<feature type="transmembrane region" description="Helical" evidence="1">
    <location>
        <begin position="418"/>
        <end position="438"/>
    </location>
</feature>
<feature type="transmembrane region" description="Helical" evidence="1">
    <location>
        <begin position="484"/>
        <end position="504"/>
    </location>
</feature>
<dbReference type="EC" id="7.1.1.-" evidence="1"/>
<dbReference type="EMBL" id="AJ879453">
    <property type="protein sequence ID" value="CAI53854.1"/>
    <property type="molecule type" value="Genomic_DNA"/>
</dbReference>
<dbReference type="SMR" id="P0CC21"/>
<dbReference type="GO" id="GO:0009535">
    <property type="term" value="C:chloroplast thylakoid membrane"/>
    <property type="evidence" value="ECO:0007669"/>
    <property type="project" value="UniProtKB-SubCell"/>
</dbReference>
<dbReference type="GO" id="GO:0008137">
    <property type="term" value="F:NADH dehydrogenase (ubiquinone) activity"/>
    <property type="evidence" value="ECO:0007669"/>
    <property type="project" value="InterPro"/>
</dbReference>
<dbReference type="GO" id="GO:0048038">
    <property type="term" value="F:quinone binding"/>
    <property type="evidence" value="ECO:0007669"/>
    <property type="project" value="UniProtKB-KW"/>
</dbReference>
<dbReference type="GO" id="GO:0042773">
    <property type="term" value="P:ATP synthesis coupled electron transport"/>
    <property type="evidence" value="ECO:0007669"/>
    <property type="project" value="InterPro"/>
</dbReference>
<dbReference type="GO" id="GO:0019684">
    <property type="term" value="P:photosynthesis, light reaction"/>
    <property type="evidence" value="ECO:0007669"/>
    <property type="project" value="UniProtKB-UniRule"/>
</dbReference>
<dbReference type="HAMAP" id="MF_00445">
    <property type="entry name" value="NDH1_NuoN_1"/>
    <property type="match status" value="1"/>
</dbReference>
<dbReference type="InterPro" id="IPR010096">
    <property type="entry name" value="NADH-Q_OxRdtase_suN/2"/>
</dbReference>
<dbReference type="InterPro" id="IPR001750">
    <property type="entry name" value="ND/Mrp_TM"/>
</dbReference>
<dbReference type="InterPro" id="IPR045693">
    <property type="entry name" value="Ndh2_N"/>
</dbReference>
<dbReference type="NCBIfam" id="TIGR01770">
    <property type="entry name" value="NDH_I_N"/>
    <property type="match status" value="1"/>
</dbReference>
<dbReference type="NCBIfam" id="NF002701">
    <property type="entry name" value="PRK02504.1"/>
    <property type="match status" value="1"/>
</dbReference>
<dbReference type="PANTHER" id="PTHR22773">
    <property type="entry name" value="NADH DEHYDROGENASE"/>
    <property type="match status" value="1"/>
</dbReference>
<dbReference type="Pfam" id="PF19530">
    <property type="entry name" value="Ndh2_N"/>
    <property type="match status" value="1"/>
</dbReference>
<dbReference type="Pfam" id="PF00361">
    <property type="entry name" value="Proton_antipo_M"/>
    <property type="match status" value="1"/>
</dbReference>
<dbReference type="PRINTS" id="PR01434">
    <property type="entry name" value="NADHDHGNASE5"/>
</dbReference>
<geneLocation type="chloroplast"/>
<sequence>MIWHVQNENFILDSTRIFMKAFHLLLFDGSFIFPECILIFGLILLLMIDSTSDQKDRPWFYFISSTSLVMSIAALLFRWREEPMISFSGNFQTNNFNEIFQFLILLCSTLCIPLSVEYIECTEMAITEFLLFVLTATLGGMFLCGANDSITIFVAPECFSLCSYLLSGYTKRDVRSNEATMKYLLMGGASSSILVHGFSWLYGLSGGEIELQEIVNGLINTQMYNSPGISIALIFITVGIGFKLSLAPFHQWTPDVYEGSPTPVVAFLSVTSKVAASASATRIFDIPFYFSSNEWHLLLEILAILSMILGNLIAITQTSMKRMLAYSSIGQIGYVIIGIIVGDSNDGYASMITYMLFYISMNLGTFARIVLFGLRTGTDNIRDYAGLYTKDPFLALSLALCLLSLGGLPPLAGFFGKLHLFWCGWQAGLYFLVSIGLLTSVVSIYYYLKIIKLLMTGRNQEITPHVRNYRRSPLRSNNSIELSMIVCVIASTIPGISMNPILAIAQDTLF</sequence>
<gene>
    <name evidence="1" type="primary">ndhB1</name>
</gene>
<accession>P0CC21</accession>
<accession>Q3V4X4</accession>
<evidence type="ECO:0000255" key="1">
    <source>
        <dbReference type="HAMAP-Rule" id="MF_00445"/>
    </source>
</evidence>
<proteinExistence type="inferred from homology"/>
<name>NU2C1_ACOCL</name>
<keyword id="KW-0150">Chloroplast</keyword>
<keyword id="KW-0472">Membrane</keyword>
<keyword id="KW-0520">NAD</keyword>
<keyword id="KW-0521">NADP</keyword>
<keyword id="KW-0934">Plastid</keyword>
<keyword id="KW-0618">Plastoquinone</keyword>
<keyword id="KW-0874">Quinone</keyword>
<keyword id="KW-0793">Thylakoid</keyword>
<keyword id="KW-1278">Translocase</keyword>
<keyword id="KW-0812">Transmembrane</keyword>
<keyword id="KW-1133">Transmembrane helix</keyword>
<keyword id="KW-0813">Transport</keyword>
<protein>
    <recommendedName>
        <fullName evidence="1">NAD(P)H-quinone oxidoreductase subunit 2 A, chloroplastic</fullName>
        <ecNumber evidence="1">7.1.1.-</ecNumber>
    </recommendedName>
    <alternativeName>
        <fullName evidence="1">NAD(P)H dehydrogenase, subunit 2 A</fullName>
    </alternativeName>
    <alternativeName>
        <fullName evidence="1">NADH-plastoquinone oxidoreductase subunit 2 A</fullName>
    </alternativeName>
</protein>